<evidence type="ECO:0000255" key="1">
    <source>
        <dbReference type="HAMAP-Rule" id="MF_01907"/>
    </source>
</evidence>
<feature type="peptide" id="PRO_0000044010" description="thr operon leader peptide">
    <location>
        <begin position="1"/>
        <end position="21"/>
    </location>
</feature>
<dbReference type="EMBL" id="AE005674">
    <property type="protein sequence ID" value="AAN41668.1"/>
    <property type="molecule type" value="Genomic_DNA"/>
</dbReference>
<dbReference type="EMBL" id="AE014073">
    <property type="protein sequence ID" value="AAP15548.1"/>
    <property type="molecule type" value="Genomic_DNA"/>
</dbReference>
<dbReference type="RefSeq" id="NP_705961.1">
    <property type="nucleotide sequence ID" value="NC_004337.2"/>
</dbReference>
<dbReference type="RefSeq" id="WP_001386572.1">
    <property type="nucleotide sequence ID" value="NZ_WPGW01000013.1"/>
</dbReference>
<dbReference type="STRING" id="198214.SF0001"/>
<dbReference type="PaxDb" id="198214-SF0001"/>
<dbReference type="GeneID" id="1027248"/>
<dbReference type="GeneID" id="93777441"/>
<dbReference type="KEGG" id="sfl:SF0001"/>
<dbReference type="KEGG" id="sfx:S0001"/>
<dbReference type="HOGENOM" id="CLU_221491_0_1_6"/>
<dbReference type="Proteomes" id="UP000001006">
    <property type="component" value="Chromosome"/>
</dbReference>
<dbReference type="Proteomes" id="UP000002673">
    <property type="component" value="Chromosome"/>
</dbReference>
<dbReference type="GO" id="GO:0009088">
    <property type="term" value="P:threonine biosynthetic process"/>
    <property type="evidence" value="ECO:0007669"/>
    <property type="project" value="UniProtKB-UniRule"/>
</dbReference>
<dbReference type="GO" id="GO:0031556">
    <property type="term" value="P:transcriptional attenuation by ribosome"/>
    <property type="evidence" value="ECO:0007669"/>
    <property type="project" value="UniProtKB-UniRule"/>
</dbReference>
<dbReference type="HAMAP" id="MF_01907">
    <property type="entry name" value="Leader_Thr"/>
    <property type="match status" value="1"/>
</dbReference>
<dbReference type="InterPro" id="IPR011720">
    <property type="entry name" value="Thr_lead_pept"/>
</dbReference>
<dbReference type="NCBIfam" id="NF007329">
    <property type="entry name" value="PRK09816.1"/>
    <property type="match status" value="1"/>
</dbReference>
<dbReference type="NCBIfam" id="TIGR02077">
    <property type="entry name" value="thr_lead_pep"/>
    <property type="match status" value="1"/>
</dbReference>
<dbReference type="Pfam" id="PF08254">
    <property type="entry name" value="Leader_Thr"/>
    <property type="match status" value="1"/>
</dbReference>
<organism>
    <name type="scientific">Shigella flexneri</name>
    <dbReference type="NCBI Taxonomy" id="623"/>
    <lineage>
        <taxon>Bacteria</taxon>
        <taxon>Pseudomonadati</taxon>
        <taxon>Pseudomonadota</taxon>
        <taxon>Gammaproteobacteria</taxon>
        <taxon>Enterobacterales</taxon>
        <taxon>Enterobacteriaceae</taxon>
        <taxon>Shigella</taxon>
    </lineage>
</organism>
<reference key="1">
    <citation type="journal article" date="2002" name="Nucleic Acids Res.">
        <title>Genome sequence of Shigella flexneri 2a: insights into pathogenicity through comparison with genomes of Escherichia coli K12 and O157.</title>
        <authorList>
            <person name="Jin Q."/>
            <person name="Yuan Z."/>
            <person name="Xu J."/>
            <person name="Wang Y."/>
            <person name="Shen Y."/>
            <person name="Lu W."/>
            <person name="Wang J."/>
            <person name="Liu H."/>
            <person name="Yang J."/>
            <person name="Yang F."/>
            <person name="Zhang X."/>
            <person name="Zhang J."/>
            <person name="Yang G."/>
            <person name="Wu H."/>
            <person name="Qu D."/>
            <person name="Dong J."/>
            <person name="Sun L."/>
            <person name="Xue Y."/>
            <person name="Zhao A."/>
            <person name="Gao Y."/>
            <person name="Zhu J."/>
            <person name="Kan B."/>
            <person name="Ding K."/>
            <person name="Chen S."/>
            <person name="Cheng H."/>
            <person name="Yao Z."/>
            <person name="He B."/>
            <person name="Chen R."/>
            <person name="Ma D."/>
            <person name="Qiang B."/>
            <person name="Wen Y."/>
            <person name="Hou Y."/>
            <person name="Yu J."/>
        </authorList>
    </citation>
    <scope>NUCLEOTIDE SEQUENCE [LARGE SCALE GENOMIC DNA]</scope>
    <source>
        <strain>301 / Serotype 2a</strain>
    </source>
</reference>
<reference key="2">
    <citation type="journal article" date="2003" name="Infect. Immun.">
        <title>Complete genome sequence and comparative genomics of Shigella flexneri serotype 2a strain 2457T.</title>
        <authorList>
            <person name="Wei J."/>
            <person name="Goldberg M.B."/>
            <person name="Burland V."/>
            <person name="Venkatesan M.M."/>
            <person name="Deng W."/>
            <person name="Fournier G."/>
            <person name="Mayhew G.F."/>
            <person name="Plunkett G. III"/>
            <person name="Rose D.J."/>
            <person name="Darling A."/>
            <person name="Mau B."/>
            <person name="Perna N.T."/>
            <person name="Payne S.M."/>
            <person name="Runyen-Janecky L.J."/>
            <person name="Zhou S."/>
            <person name="Schwartz D.C."/>
            <person name="Blattner F.R."/>
        </authorList>
    </citation>
    <scope>NUCLEOTIDE SEQUENCE [LARGE SCALE GENOMIC DNA]</scope>
    <source>
        <strain>ATCC 700930 / 2457T / Serotype 2a</strain>
    </source>
</reference>
<keyword id="KW-0028">Amino-acid biosynthesis</keyword>
<keyword id="KW-0428">Leader peptide</keyword>
<keyword id="KW-1185">Reference proteome</keyword>
<keyword id="KW-0791">Threonine biosynthesis</keyword>
<sequence length="21" mass="2138">MKRISTTITTTITITTGNGAG</sequence>
<protein>
    <recommendedName>
        <fullName evidence="1">thr operon leader peptide</fullName>
    </recommendedName>
    <alternativeName>
        <fullName evidence="1">thr operon attenuator</fullName>
    </alternativeName>
</protein>
<name>LPT_SHIFL</name>
<comment type="function">
    <text evidence="1">This protein is involved in control of the biosynthesis of threonine.</text>
</comment>
<comment type="similarity">
    <text evidence="1">Belongs to the thr operon leader peptide family.</text>
</comment>
<accession>P0AD88</accession>
<accession>P03059</accession>
<gene>
    <name evidence="1" type="primary">thrL</name>
    <name type="ordered locus">SF0001</name>
    <name type="ordered locus">S0001</name>
</gene>
<proteinExistence type="inferred from homology"/>